<protein>
    <recommendedName>
        <fullName evidence="1">Transcription antitermination protein NusB</fullName>
    </recommendedName>
    <alternativeName>
        <fullName evidence="1">Antitermination factor NusB</fullName>
    </alternativeName>
</protein>
<evidence type="ECO:0000255" key="1">
    <source>
        <dbReference type="HAMAP-Rule" id="MF_00073"/>
    </source>
</evidence>
<dbReference type="EMBL" id="CP000266">
    <property type="protein sequence ID" value="ABF02653.1"/>
    <property type="molecule type" value="Genomic_DNA"/>
</dbReference>
<dbReference type="RefSeq" id="WP_000801125.1">
    <property type="nucleotide sequence ID" value="NC_008258.1"/>
</dbReference>
<dbReference type="SMR" id="Q0T7H3"/>
<dbReference type="GeneID" id="93777044"/>
<dbReference type="KEGG" id="sfv:SFV_0381"/>
<dbReference type="HOGENOM" id="CLU_087843_4_1_6"/>
<dbReference type="Proteomes" id="UP000000659">
    <property type="component" value="Chromosome"/>
</dbReference>
<dbReference type="GO" id="GO:0005829">
    <property type="term" value="C:cytosol"/>
    <property type="evidence" value="ECO:0007669"/>
    <property type="project" value="TreeGrafter"/>
</dbReference>
<dbReference type="GO" id="GO:0003723">
    <property type="term" value="F:RNA binding"/>
    <property type="evidence" value="ECO:0007669"/>
    <property type="project" value="UniProtKB-UniRule"/>
</dbReference>
<dbReference type="GO" id="GO:0006353">
    <property type="term" value="P:DNA-templated transcription termination"/>
    <property type="evidence" value="ECO:0007669"/>
    <property type="project" value="UniProtKB-UniRule"/>
</dbReference>
<dbReference type="GO" id="GO:0031564">
    <property type="term" value="P:transcription antitermination"/>
    <property type="evidence" value="ECO:0007669"/>
    <property type="project" value="UniProtKB-KW"/>
</dbReference>
<dbReference type="CDD" id="cd00619">
    <property type="entry name" value="Terminator_NusB"/>
    <property type="match status" value="1"/>
</dbReference>
<dbReference type="FunFam" id="1.10.940.10:FF:000001">
    <property type="entry name" value="Transcription antitermination factor NusB"/>
    <property type="match status" value="1"/>
</dbReference>
<dbReference type="Gene3D" id="1.10.940.10">
    <property type="entry name" value="NusB-like"/>
    <property type="match status" value="1"/>
</dbReference>
<dbReference type="HAMAP" id="MF_00073">
    <property type="entry name" value="NusB"/>
    <property type="match status" value="1"/>
</dbReference>
<dbReference type="InterPro" id="IPR035926">
    <property type="entry name" value="NusB-like_sf"/>
</dbReference>
<dbReference type="InterPro" id="IPR011605">
    <property type="entry name" value="NusB_fam"/>
</dbReference>
<dbReference type="InterPro" id="IPR006027">
    <property type="entry name" value="NusB_RsmB_TIM44"/>
</dbReference>
<dbReference type="NCBIfam" id="TIGR01951">
    <property type="entry name" value="nusB"/>
    <property type="match status" value="1"/>
</dbReference>
<dbReference type="PANTHER" id="PTHR11078:SF3">
    <property type="entry name" value="ANTITERMINATION NUSB DOMAIN-CONTAINING PROTEIN"/>
    <property type="match status" value="1"/>
</dbReference>
<dbReference type="PANTHER" id="PTHR11078">
    <property type="entry name" value="N UTILIZATION SUBSTANCE PROTEIN B-RELATED"/>
    <property type="match status" value="1"/>
</dbReference>
<dbReference type="Pfam" id="PF01029">
    <property type="entry name" value="NusB"/>
    <property type="match status" value="1"/>
</dbReference>
<dbReference type="SUPFAM" id="SSF48013">
    <property type="entry name" value="NusB-like"/>
    <property type="match status" value="1"/>
</dbReference>
<organism>
    <name type="scientific">Shigella flexneri serotype 5b (strain 8401)</name>
    <dbReference type="NCBI Taxonomy" id="373384"/>
    <lineage>
        <taxon>Bacteria</taxon>
        <taxon>Pseudomonadati</taxon>
        <taxon>Pseudomonadota</taxon>
        <taxon>Gammaproteobacteria</taxon>
        <taxon>Enterobacterales</taxon>
        <taxon>Enterobacteriaceae</taxon>
        <taxon>Shigella</taxon>
    </lineage>
</organism>
<gene>
    <name evidence="1" type="primary">nusB</name>
    <name type="ordered locus">SFV_0381</name>
</gene>
<accession>Q0T7H3</accession>
<proteinExistence type="inferred from homology"/>
<sequence length="139" mass="15689">MKPAARRRARECAVQALYSWQLSQNDIADVEYQFLAEQDVKDVDVLYFRELLAGVATNTAYLDGLMKPYLSRLLEELGQVEKAVLRIALYELSKRSDVPYKVAINEAIELAKSFGAEDSHKFVNGVLDKAAPVIRPNKK</sequence>
<keyword id="KW-0694">RNA-binding</keyword>
<keyword id="KW-0804">Transcription</keyword>
<keyword id="KW-0889">Transcription antitermination</keyword>
<keyword id="KW-0805">Transcription regulation</keyword>
<name>NUSB_SHIF8</name>
<feature type="chain" id="PRO_1000023776" description="Transcription antitermination protein NusB">
    <location>
        <begin position="1"/>
        <end position="139"/>
    </location>
</feature>
<comment type="function">
    <text evidence="1">Involved in transcription antitermination. Required for transcription of ribosomal RNA (rRNA) genes. Binds specifically to the boxA antiterminator sequence of the ribosomal RNA (rrn) operons.</text>
</comment>
<comment type="similarity">
    <text evidence="1">Belongs to the NusB family.</text>
</comment>
<reference key="1">
    <citation type="journal article" date="2006" name="BMC Genomics">
        <title>Complete genome sequence of Shigella flexneri 5b and comparison with Shigella flexneri 2a.</title>
        <authorList>
            <person name="Nie H."/>
            <person name="Yang F."/>
            <person name="Zhang X."/>
            <person name="Yang J."/>
            <person name="Chen L."/>
            <person name="Wang J."/>
            <person name="Xiong Z."/>
            <person name="Peng J."/>
            <person name="Sun L."/>
            <person name="Dong J."/>
            <person name="Xue Y."/>
            <person name="Xu X."/>
            <person name="Chen S."/>
            <person name="Yao Z."/>
            <person name="Shen Y."/>
            <person name="Jin Q."/>
        </authorList>
    </citation>
    <scope>NUCLEOTIDE SEQUENCE [LARGE SCALE GENOMIC DNA]</scope>
    <source>
        <strain>8401</strain>
    </source>
</reference>